<name>CADH8_RAT</name>
<organism>
    <name type="scientific">Rattus norvegicus</name>
    <name type="common">Rat</name>
    <dbReference type="NCBI Taxonomy" id="10116"/>
    <lineage>
        <taxon>Eukaryota</taxon>
        <taxon>Metazoa</taxon>
        <taxon>Chordata</taxon>
        <taxon>Craniata</taxon>
        <taxon>Vertebrata</taxon>
        <taxon>Euteleostomi</taxon>
        <taxon>Mammalia</taxon>
        <taxon>Eutheria</taxon>
        <taxon>Euarchontoglires</taxon>
        <taxon>Glires</taxon>
        <taxon>Rodentia</taxon>
        <taxon>Myomorpha</taxon>
        <taxon>Muroidea</taxon>
        <taxon>Muridae</taxon>
        <taxon>Murinae</taxon>
        <taxon>Rattus</taxon>
    </lineage>
</organism>
<evidence type="ECO:0000250" key="1"/>
<evidence type="ECO:0000250" key="2">
    <source>
        <dbReference type="UniProtKB" id="P97291"/>
    </source>
</evidence>
<evidence type="ECO:0000255" key="3"/>
<evidence type="ECO:0000255" key="4">
    <source>
        <dbReference type="PROSITE-ProRule" id="PRU00043"/>
    </source>
</evidence>
<evidence type="ECO:0000305" key="5"/>
<proteinExistence type="evidence at protein level"/>
<reference key="1">
    <citation type="journal article" date="1998" name="Genomics">
        <title>Molecular properties and chromosomal location of cadherin-8.</title>
        <authorList>
            <person name="Kido M."/>
            <person name="Obata S."/>
            <person name="Tanihara H."/>
            <person name="Rochelle J.M."/>
            <person name="Seldin M.F."/>
            <person name="Taketani S."/>
            <person name="Suzuki S.T."/>
        </authorList>
    </citation>
    <scope>NUCLEOTIDE SEQUENCE [MRNA]</scope>
    <scope>ALTERNATIVE SPLICING</scope>
    <source>
        <tissue>Brain</tissue>
    </source>
</reference>
<reference key="2">
    <citation type="journal article" date="2012" name="Nat. Commun.">
        <title>Quantitative maps of protein phosphorylation sites across 14 different rat organs and tissues.</title>
        <authorList>
            <person name="Lundby A."/>
            <person name="Secher A."/>
            <person name="Lage K."/>
            <person name="Nordsborg N.B."/>
            <person name="Dmytriyev A."/>
            <person name="Lundby C."/>
            <person name="Olsen J.V."/>
        </authorList>
    </citation>
    <scope>IDENTIFICATION BY MASS SPECTROMETRY [LARGE SCALE ANALYSIS]</scope>
</reference>
<sequence length="799" mass="88333">MPERLAETLLDLWTPLIILWITLPSFVYMAPMNQAHVLTTGSPLELSRQSEEMRILNRSKRGWVWNQMFVLEEFSGPEPILVGRLHTDLDPGSKKIKYILSGDGAGTIFQINDITGDIHAIKRLDREEKAEYTLTAQAVDWETNKPLEPPSEFIIKVQDINDNAPEFLNGPYHATVPEMSILGTSVTNVTATDADDPVYGNSAKLVYSILEGQPYFSIEPETAIIKTALPNMDREAKEEYLVVIQAKDMGGHSGGLSGTTTLTVTLTDVNDNPPKFAQSLYHFSVPEDVVLGTAIGRVKANDQDIGENAQSSYDIIDGDGTALFEITSDAQAQDGVIRLRKPLDFETKKSYTLKVEAANIHIDPRFSGRGPFKDTATVKIVVEDADEPPVFSSPTYLLEVHENAALNSVIGQVTARDPDITSSPIRFSIDRHTDLERQFNINADDGKITLATPLDRELSVWHNISIIATEIRNHSQISRVPVAIKVLDVNDNAPEFASEYEAFLCENGKPGQVIQTVSAMDKDDPKNGHFFLYSLLPEMVNNPNFTIKKNEDNSLSILAKHNGFNRQKQEVYLLPIVISDSGNPPLSSTSTLTIRVCGCSNDGVVQSCNVEPYVLPIGLSMGALIAILACIILLLVIVVLFVTLRRHKNEPLIIKDDEDVRENIIRYDDEGGGEEDTEAFDIATLQNPDGINGFLPRKDIKPDLQFMPRQGLAPVPNGVDVDEFINVRLHEADNDPTAPPYDSIQIYGYEGRGSVAGSLSSLESTTSDSDQNFDYLSDWGPRFKRLGELYSVGESDKET</sequence>
<feature type="signal peptide" evidence="3">
    <location>
        <begin position="1"/>
        <end position="29"/>
    </location>
</feature>
<feature type="propeptide" id="PRO_0000003777" evidence="3">
    <location>
        <begin position="30"/>
        <end position="61"/>
    </location>
</feature>
<feature type="chain" id="PRO_0000003778" description="Cadherin-8">
    <location>
        <begin position="62"/>
        <end position="799"/>
    </location>
</feature>
<feature type="topological domain" description="Extracellular" evidence="3">
    <location>
        <begin position="62"/>
        <end position="621"/>
    </location>
</feature>
<feature type="transmembrane region" description="Helical" evidence="3">
    <location>
        <begin position="622"/>
        <end position="642"/>
    </location>
</feature>
<feature type="topological domain" description="Cytoplasmic" evidence="3">
    <location>
        <begin position="643"/>
        <end position="799"/>
    </location>
</feature>
<feature type="domain" description="Cadherin 1" evidence="4">
    <location>
        <begin position="62"/>
        <end position="167"/>
    </location>
</feature>
<feature type="domain" description="Cadherin 2" evidence="4">
    <location>
        <begin position="168"/>
        <end position="276"/>
    </location>
</feature>
<feature type="domain" description="Cadherin 3" evidence="4">
    <location>
        <begin position="277"/>
        <end position="391"/>
    </location>
</feature>
<feature type="domain" description="Cadherin 4" evidence="4">
    <location>
        <begin position="392"/>
        <end position="494"/>
    </location>
</feature>
<feature type="domain" description="Cadherin 5" evidence="4">
    <location>
        <begin position="495"/>
        <end position="616"/>
    </location>
</feature>
<feature type="modified residue" description="Phosphoserine" evidence="2">
    <location>
        <position position="795"/>
    </location>
</feature>
<feature type="glycosylation site" description="N-linked (GlcNAc...) asparagine" evidence="3">
    <location>
        <position position="188"/>
    </location>
</feature>
<feature type="glycosylation site" description="N-linked (GlcNAc...) asparagine" evidence="3">
    <location>
        <position position="463"/>
    </location>
</feature>
<feature type="glycosylation site" description="N-linked (GlcNAc...) asparagine" evidence="3">
    <location>
        <position position="473"/>
    </location>
</feature>
<feature type="glycosylation site" description="N-linked (GlcNAc...) asparagine" evidence="3">
    <location>
        <position position="544"/>
    </location>
</feature>
<feature type="splice variant" id="VSP_000638" description="In isoform 2." evidence="5">
    <original>IQTVSAMDKDDPKNGHFFL</original>
    <variation>NISMLLILNMFVYNCFLVN</variation>
    <location>
        <begin position="514"/>
        <end position="532"/>
    </location>
</feature>
<feature type="splice variant" id="VSP_000639" description="In isoform 2." evidence="5">
    <location>
        <begin position="533"/>
        <end position="799"/>
    </location>
</feature>
<dbReference type="EMBL" id="AB010436">
    <property type="protein sequence ID" value="BAA24452.1"/>
    <property type="molecule type" value="mRNA"/>
</dbReference>
<dbReference type="EMBL" id="AB010437">
    <property type="protein sequence ID" value="BAA24453.1"/>
    <property type="molecule type" value="mRNA"/>
</dbReference>
<dbReference type="SMR" id="O54800"/>
<dbReference type="FunCoup" id="O54800">
    <property type="interactions" value="881"/>
</dbReference>
<dbReference type="STRING" id="10116.ENSRNOP00000072182"/>
<dbReference type="GlyCosmos" id="O54800">
    <property type="glycosylation" value="4 sites, No reported glycans"/>
</dbReference>
<dbReference type="GlyGen" id="O54800">
    <property type="glycosylation" value="4 sites"/>
</dbReference>
<dbReference type="iPTMnet" id="O54800"/>
<dbReference type="PhosphoSitePlus" id="O54800"/>
<dbReference type="PaxDb" id="10116-ENSRNOP00000062147"/>
<dbReference type="UCSC" id="RGD:69286">
    <molecule id="O54800-1"/>
    <property type="organism name" value="rat"/>
</dbReference>
<dbReference type="AGR" id="RGD:69286"/>
<dbReference type="RGD" id="69286">
    <property type="gene designation" value="Cdh8"/>
</dbReference>
<dbReference type="eggNOG" id="KOG3594">
    <property type="taxonomic scope" value="Eukaryota"/>
</dbReference>
<dbReference type="InParanoid" id="O54800"/>
<dbReference type="PhylomeDB" id="O54800"/>
<dbReference type="Reactome" id="R-RNO-418990">
    <property type="pathway name" value="Adherens junctions interactions"/>
</dbReference>
<dbReference type="PRO" id="PR:O54800"/>
<dbReference type="Proteomes" id="UP000002494">
    <property type="component" value="Unplaced"/>
</dbReference>
<dbReference type="GO" id="GO:0005912">
    <property type="term" value="C:adherens junction"/>
    <property type="evidence" value="ECO:0000318"/>
    <property type="project" value="GO_Central"/>
</dbReference>
<dbReference type="GO" id="GO:0043679">
    <property type="term" value="C:axon terminus"/>
    <property type="evidence" value="ECO:0000266"/>
    <property type="project" value="RGD"/>
</dbReference>
<dbReference type="GO" id="GO:0016342">
    <property type="term" value="C:catenin complex"/>
    <property type="evidence" value="ECO:0000318"/>
    <property type="project" value="GO_Central"/>
</dbReference>
<dbReference type="GO" id="GO:0098978">
    <property type="term" value="C:glutamatergic synapse"/>
    <property type="evidence" value="ECO:0000266"/>
    <property type="project" value="RGD"/>
</dbReference>
<dbReference type="GO" id="GO:0043083">
    <property type="term" value="C:synaptic cleft"/>
    <property type="evidence" value="ECO:0000266"/>
    <property type="project" value="RGD"/>
</dbReference>
<dbReference type="GO" id="GO:0097060">
    <property type="term" value="C:synaptic membrane"/>
    <property type="evidence" value="ECO:0000266"/>
    <property type="project" value="RGD"/>
</dbReference>
<dbReference type="GO" id="GO:0008013">
    <property type="term" value="F:beta-catenin binding"/>
    <property type="evidence" value="ECO:0000318"/>
    <property type="project" value="GO_Central"/>
</dbReference>
<dbReference type="GO" id="GO:0045296">
    <property type="term" value="F:cadherin binding"/>
    <property type="evidence" value="ECO:0000318"/>
    <property type="project" value="GO_Central"/>
</dbReference>
<dbReference type="GO" id="GO:0005509">
    <property type="term" value="F:calcium ion binding"/>
    <property type="evidence" value="ECO:0007669"/>
    <property type="project" value="InterPro"/>
</dbReference>
<dbReference type="GO" id="GO:0042802">
    <property type="term" value="F:identical protein binding"/>
    <property type="evidence" value="ECO:0000266"/>
    <property type="project" value="RGD"/>
</dbReference>
<dbReference type="GO" id="GO:0034332">
    <property type="term" value="P:adherens junction organization"/>
    <property type="evidence" value="ECO:0000318"/>
    <property type="project" value="GO_Central"/>
</dbReference>
<dbReference type="GO" id="GO:0016339">
    <property type="term" value="P:calcium-dependent cell-cell adhesion via plasma membrane cell adhesion molecules"/>
    <property type="evidence" value="ECO:0000318"/>
    <property type="project" value="GO_Central"/>
</dbReference>
<dbReference type="GO" id="GO:0016477">
    <property type="term" value="P:cell migration"/>
    <property type="evidence" value="ECO:0000318"/>
    <property type="project" value="GO_Central"/>
</dbReference>
<dbReference type="GO" id="GO:0000902">
    <property type="term" value="P:cell morphogenesis"/>
    <property type="evidence" value="ECO:0000318"/>
    <property type="project" value="GO_Central"/>
</dbReference>
<dbReference type="GO" id="GO:0098609">
    <property type="term" value="P:cell-cell adhesion"/>
    <property type="evidence" value="ECO:0000303"/>
    <property type="project" value="RGD"/>
</dbReference>
<dbReference type="GO" id="GO:0044331">
    <property type="term" value="P:cell-cell adhesion mediated by cadherin"/>
    <property type="evidence" value="ECO:0000318"/>
    <property type="project" value="GO_Central"/>
</dbReference>
<dbReference type="GO" id="GO:0007043">
    <property type="term" value="P:cell-cell junction assembly"/>
    <property type="evidence" value="ECO:0000318"/>
    <property type="project" value="GO_Central"/>
</dbReference>
<dbReference type="GO" id="GO:0007268">
    <property type="term" value="P:chemical synaptic transmission"/>
    <property type="evidence" value="ECO:0000266"/>
    <property type="project" value="RGD"/>
</dbReference>
<dbReference type="GO" id="GO:0007156">
    <property type="term" value="P:homophilic cell adhesion via plasma membrane adhesion molecules"/>
    <property type="evidence" value="ECO:0007669"/>
    <property type="project" value="InterPro"/>
</dbReference>
<dbReference type="GO" id="GO:0050807">
    <property type="term" value="P:regulation of synapse organization"/>
    <property type="evidence" value="ECO:0000266"/>
    <property type="project" value="RGD"/>
</dbReference>
<dbReference type="GO" id="GO:0009409">
    <property type="term" value="P:response to cold"/>
    <property type="evidence" value="ECO:0000266"/>
    <property type="project" value="RGD"/>
</dbReference>
<dbReference type="GO" id="GO:0007283">
    <property type="term" value="P:spermatogenesis"/>
    <property type="evidence" value="ECO:0000303"/>
    <property type="project" value="RGD"/>
</dbReference>
<dbReference type="GO" id="GO:0035249">
    <property type="term" value="P:synaptic transmission, glutamatergic"/>
    <property type="evidence" value="ECO:0000266"/>
    <property type="project" value="RGD"/>
</dbReference>
<dbReference type="CDD" id="cd11304">
    <property type="entry name" value="Cadherin_repeat"/>
    <property type="match status" value="5"/>
</dbReference>
<dbReference type="FunFam" id="4.10.900.10:FF:000001">
    <property type="entry name" value="Cadherin 2"/>
    <property type="match status" value="1"/>
</dbReference>
<dbReference type="FunFam" id="2.60.40.60:FF:000008">
    <property type="entry name" value="Cadherin 24"/>
    <property type="match status" value="1"/>
</dbReference>
<dbReference type="FunFam" id="2.60.40.60:FF:000009">
    <property type="entry name" value="Cadherin 24"/>
    <property type="match status" value="1"/>
</dbReference>
<dbReference type="FunFam" id="2.60.40.60:FF:000012">
    <property type="entry name" value="Cadherin 24"/>
    <property type="match status" value="1"/>
</dbReference>
<dbReference type="FunFam" id="2.60.40.60:FF:000017">
    <property type="entry name" value="Cadherin 24"/>
    <property type="match status" value="1"/>
</dbReference>
<dbReference type="FunFam" id="2.60.40.60:FF:000014">
    <property type="entry name" value="Cadherin 8"/>
    <property type="match status" value="1"/>
</dbReference>
<dbReference type="Gene3D" id="2.60.40.60">
    <property type="entry name" value="Cadherins"/>
    <property type="match status" value="5"/>
</dbReference>
<dbReference type="Gene3D" id="4.10.900.10">
    <property type="entry name" value="TCF3-CBD (Catenin binding domain)"/>
    <property type="match status" value="1"/>
</dbReference>
<dbReference type="InterPro" id="IPR039808">
    <property type="entry name" value="Cadherin"/>
</dbReference>
<dbReference type="InterPro" id="IPR002126">
    <property type="entry name" value="Cadherin-like_dom"/>
</dbReference>
<dbReference type="InterPro" id="IPR015919">
    <property type="entry name" value="Cadherin-like_sf"/>
</dbReference>
<dbReference type="InterPro" id="IPR020894">
    <property type="entry name" value="Cadherin_CS"/>
</dbReference>
<dbReference type="InterPro" id="IPR000233">
    <property type="entry name" value="Cadherin_Y-type_LIR"/>
</dbReference>
<dbReference type="InterPro" id="IPR027397">
    <property type="entry name" value="Catenin-bd_sf"/>
</dbReference>
<dbReference type="PANTHER" id="PTHR24027">
    <property type="entry name" value="CADHERIN-23"/>
    <property type="match status" value="1"/>
</dbReference>
<dbReference type="PANTHER" id="PTHR24027:SF273">
    <property type="entry name" value="CADHERIN-8"/>
    <property type="match status" value="1"/>
</dbReference>
<dbReference type="Pfam" id="PF01049">
    <property type="entry name" value="CADH_Y-type_LIR"/>
    <property type="match status" value="1"/>
</dbReference>
<dbReference type="Pfam" id="PF00028">
    <property type="entry name" value="Cadherin"/>
    <property type="match status" value="5"/>
</dbReference>
<dbReference type="PRINTS" id="PR00205">
    <property type="entry name" value="CADHERIN"/>
</dbReference>
<dbReference type="SMART" id="SM00112">
    <property type="entry name" value="CA"/>
    <property type="match status" value="5"/>
</dbReference>
<dbReference type="SUPFAM" id="SSF49313">
    <property type="entry name" value="Cadherin-like"/>
    <property type="match status" value="5"/>
</dbReference>
<dbReference type="PROSITE" id="PS00232">
    <property type="entry name" value="CADHERIN_1"/>
    <property type="match status" value="3"/>
</dbReference>
<dbReference type="PROSITE" id="PS50268">
    <property type="entry name" value="CADHERIN_2"/>
    <property type="match status" value="5"/>
</dbReference>
<protein>
    <recommendedName>
        <fullName>Cadherin-8</fullName>
    </recommendedName>
</protein>
<accession>O54800</accession>
<accession>O54801</accession>
<keyword id="KW-0025">Alternative splicing</keyword>
<keyword id="KW-0106">Calcium</keyword>
<keyword id="KW-0130">Cell adhesion</keyword>
<keyword id="KW-1003">Cell membrane</keyword>
<keyword id="KW-0165">Cleavage on pair of basic residues</keyword>
<keyword id="KW-0325">Glycoprotein</keyword>
<keyword id="KW-0472">Membrane</keyword>
<keyword id="KW-0479">Metal-binding</keyword>
<keyword id="KW-0597">Phosphoprotein</keyword>
<keyword id="KW-1185">Reference proteome</keyword>
<keyword id="KW-0677">Repeat</keyword>
<keyword id="KW-0732">Signal</keyword>
<keyword id="KW-0812">Transmembrane</keyword>
<keyword id="KW-1133">Transmembrane helix</keyword>
<gene>
    <name type="primary">Cdh8</name>
</gene>
<comment type="function">
    <text>Cadherins are calcium-dependent cell adhesion proteins. They preferentially interact with themselves in a homophilic manner in connecting cells; cadherins may thus contribute to the sorting of heterogeneous cell types.</text>
</comment>
<comment type="subcellular location">
    <subcellularLocation>
        <location>Cell membrane</location>
        <topology>Single-pass type I membrane protein</topology>
    </subcellularLocation>
</comment>
<comment type="alternative products">
    <event type="alternative splicing"/>
    <isoform>
        <id>O54800-1</id>
        <name>1</name>
        <sequence type="displayed"/>
    </isoform>
    <isoform>
        <id>O54800-2</id>
        <name>2</name>
        <sequence type="described" ref="VSP_000638 VSP_000639"/>
    </isoform>
</comment>
<comment type="domain">
    <text evidence="1">Three calcium ions are usually bound at the interface of each cadherin domain and rigidify the connections, imparting a strong curvature to the full-length ectodomain.</text>
</comment>